<comment type="function">
    <text evidence="1">May regulate cell apoptosis and cell differentiation. Binds beta-galactoside and a wide array of complex carbohydrates (By similarity).</text>
</comment>
<comment type="subunit">
    <text evidence="3">Homodimer.</text>
</comment>
<comment type="subcellular location">
    <subcellularLocation>
        <location>Secreted</location>
        <location>Extracellular space</location>
        <location>Extracellular matrix</location>
    </subcellularLocation>
</comment>
<name>LEG1_RHIAE</name>
<dbReference type="PDB" id="1A78">
    <property type="method" value="X-ray"/>
    <property type="resolution" value="2.00 A"/>
    <property type="chains" value="A/B=1-134"/>
</dbReference>
<dbReference type="PDB" id="1GAN">
    <property type="method" value="X-ray"/>
    <property type="resolution" value="2.23 A"/>
    <property type="chains" value="A/B=1-134"/>
</dbReference>
<dbReference type="PDBsum" id="1A78"/>
<dbReference type="PDBsum" id="1GAN"/>
<dbReference type="SMR" id="P56217"/>
<dbReference type="UniLectin" id="P56217"/>
<dbReference type="iPTMnet" id="P56217"/>
<dbReference type="EvolutionaryTrace" id="P56217"/>
<dbReference type="GO" id="GO:0005615">
    <property type="term" value="C:extracellular space"/>
    <property type="evidence" value="ECO:0007669"/>
    <property type="project" value="TreeGrafter"/>
</dbReference>
<dbReference type="GO" id="GO:0030395">
    <property type="term" value="F:lactose binding"/>
    <property type="evidence" value="ECO:0007669"/>
    <property type="project" value="TreeGrafter"/>
</dbReference>
<dbReference type="GO" id="GO:0043236">
    <property type="term" value="F:laminin binding"/>
    <property type="evidence" value="ECO:0007669"/>
    <property type="project" value="TreeGrafter"/>
</dbReference>
<dbReference type="CDD" id="cd00070">
    <property type="entry name" value="GLECT"/>
    <property type="match status" value="1"/>
</dbReference>
<dbReference type="FunFam" id="2.60.120.200:FF:000021">
    <property type="entry name" value="Galectin"/>
    <property type="match status" value="1"/>
</dbReference>
<dbReference type="Gene3D" id="2.60.120.200">
    <property type="match status" value="1"/>
</dbReference>
<dbReference type="InterPro" id="IPR013320">
    <property type="entry name" value="ConA-like_dom_sf"/>
</dbReference>
<dbReference type="InterPro" id="IPR044156">
    <property type="entry name" value="Galectin-like"/>
</dbReference>
<dbReference type="InterPro" id="IPR001079">
    <property type="entry name" value="Galectin_CRD"/>
</dbReference>
<dbReference type="PANTHER" id="PTHR11346">
    <property type="entry name" value="GALECTIN"/>
    <property type="match status" value="1"/>
</dbReference>
<dbReference type="PANTHER" id="PTHR11346:SF97">
    <property type="entry name" value="GALECTIN-1"/>
    <property type="match status" value="1"/>
</dbReference>
<dbReference type="Pfam" id="PF00337">
    <property type="entry name" value="Gal-bind_lectin"/>
    <property type="match status" value="1"/>
</dbReference>
<dbReference type="SMART" id="SM00908">
    <property type="entry name" value="Gal-bind_lectin"/>
    <property type="match status" value="1"/>
</dbReference>
<dbReference type="SMART" id="SM00276">
    <property type="entry name" value="GLECT"/>
    <property type="match status" value="1"/>
</dbReference>
<dbReference type="SUPFAM" id="SSF49899">
    <property type="entry name" value="Concanavalin A-like lectins/glucanases"/>
    <property type="match status" value="1"/>
</dbReference>
<dbReference type="PROSITE" id="PS51304">
    <property type="entry name" value="GALECTIN"/>
    <property type="match status" value="1"/>
</dbReference>
<reference key="1">
    <citation type="journal article" date="1996" name="J. Biol. Chem.">
        <title>The primary structure and carbohydrate specificity of a beta-galactosyl-binding lectin from toad (Bufo arenarum Hensel) ovary reveal closer similarities to the mammalian galectin-1 than to the galectin from the clawed frog Xenopus laevis.</title>
        <authorList>
            <person name="Ahmed H."/>
            <person name="Pohl J."/>
            <person name="Fink N.E."/>
            <person name="Strobel F."/>
            <person name="Vasta G.R."/>
        </authorList>
    </citation>
    <scope>PROTEIN SEQUENCE</scope>
    <scope>ACETYLATION AT ALA-1</scope>
    <scope>CHARACTERIZATION</scope>
    <source>
        <tissue>Ovary</tissue>
    </source>
</reference>
<reference key="2">
    <citation type="journal article" date="2000" name="Proteins">
        <title>Soluble beta-galactosyl-binding lectin (galectin) from toad ovary: crystallographic studies of two protein-sugar complexes.</title>
        <authorList>
            <person name="Bianchet M.A."/>
            <person name="Ahmed H."/>
            <person name="Vasta G.R."/>
            <person name="Amzel L.M."/>
        </authorList>
    </citation>
    <scope>X-RAY CRYSTALLOGRAPHY (2.0 ANGSTROMS) IN COMPLEX WITH CARBOHYDRATE</scope>
    <source>
        <tissue>Ovary</tissue>
    </source>
</reference>
<keyword id="KW-0002">3D-structure</keyword>
<keyword id="KW-0007">Acetylation</keyword>
<keyword id="KW-0903">Direct protein sequencing</keyword>
<keyword id="KW-0272">Extracellular matrix</keyword>
<keyword id="KW-0430">Lectin</keyword>
<keyword id="KW-0964">Secreted</keyword>
<proteinExistence type="evidence at protein level"/>
<evidence type="ECO:0000250" key="1"/>
<evidence type="ECO:0000255" key="2">
    <source>
        <dbReference type="PROSITE-ProRule" id="PRU00639"/>
    </source>
</evidence>
<evidence type="ECO:0000269" key="3">
    <source>
    </source>
</evidence>
<evidence type="ECO:0000269" key="4">
    <source>
    </source>
</evidence>
<evidence type="ECO:0007829" key="5">
    <source>
        <dbReference type="PDB" id="1A78"/>
    </source>
</evidence>
<protein>
    <recommendedName>
        <fullName>Galectin-1</fullName>
        <shortName>Gal-1</shortName>
    </recommendedName>
</protein>
<accession>P56217</accession>
<sequence>ASAGVAVTNLNLKPGHCVEIKGSIPPDCKGFAVNLGEDASNFLLHFNARFDLHGDVNKIVCNSKEADAWGSEQREEVFPFQQGAEVMVCFEYQTQKIIIKFSSGDQFSFPVRKVLPSIPFLSLEGLAFKSITTE</sequence>
<organism>
    <name type="scientific">Rhinella arenarum</name>
    <name type="common">Argentine common toad</name>
    <name type="synonym">Bufo arenarum</name>
    <dbReference type="NCBI Taxonomy" id="38577"/>
    <lineage>
        <taxon>Eukaryota</taxon>
        <taxon>Metazoa</taxon>
        <taxon>Chordata</taxon>
        <taxon>Craniata</taxon>
        <taxon>Vertebrata</taxon>
        <taxon>Euteleostomi</taxon>
        <taxon>Amphibia</taxon>
        <taxon>Batrachia</taxon>
        <taxon>Anura</taxon>
        <taxon>Neobatrachia</taxon>
        <taxon>Hyloidea</taxon>
        <taxon>Bufonidae</taxon>
        <taxon>Rhinella</taxon>
    </lineage>
</organism>
<feature type="chain" id="PRO_0000076922" description="Galectin-1">
    <location>
        <begin position="1"/>
        <end position="134"/>
    </location>
</feature>
<feature type="domain" description="Galectin" evidence="2">
    <location>
        <begin position="4"/>
        <end position="134"/>
    </location>
</feature>
<feature type="binding site">
    <location>
        <begin position="45"/>
        <end position="49"/>
    </location>
    <ligand>
        <name>a beta-D-galactoside</name>
        <dbReference type="ChEBI" id="CHEBI:28034"/>
    </ligand>
</feature>
<feature type="binding site">
    <location>
        <position position="53"/>
    </location>
    <ligand>
        <name>a beta-D-galactoside</name>
        <dbReference type="ChEBI" id="CHEBI:28034"/>
    </ligand>
</feature>
<feature type="binding site">
    <location>
        <position position="62"/>
    </location>
    <ligand>
        <name>a beta-D-galactoside</name>
        <dbReference type="ChEBI" id="CHEBI:28034"/>
    </ligand>
</feature>
<feature type="binding site">
    <location>
        <begin position="69"/>
        <end position="72"/>
    </location>
    <ligand>
        <name>a beta-D-galactoside</name>
        <dbReference type="ChEBI" id="CHEBI:28034"/>
    </ligand>
</feature>
<feature type="modified residue" description="N-acetylalanine" evidence="4">
    <location>
        <position position="1"/>
    </location>
</feature>
<feature type="strand" evidence="5">
    <location>
        <begin position="6"/>
        <end position="12"/>
    </location>
</feature>
<feature type="strand" evidence="5">
    <location>
        <begin position="16"/>
        <end position="23"/>
    </location>
</feature>
<feature type="strand" evidence="5">
    <location>
        <begin position="29"/>
        <end position="38"/>
    </location>
</feature>
<feature type="strand" evidence="5">
    <location>
        <begin position="41"/>
        <end position="52"/>
    </location>
</feature>
<feature type="strand" evidence="5">
    <location>
        <begin position="55"/>
        <end position="65"/>
    </location>
</feature>
<feature type="strand" evidence="5">
    <location>
        <begin position="73"/>
        <end position="75"/>
    </location>
</feature>
<feature type="strand" evidence="5">
    <location>
        <begin position="84"/>
        <end position="92"/>
    </location>
</feature>
<feature type="strand" evidence="5">
    <location>
        <begin position="94"/>
        <end position="101"/>
    </location>
</feature>
<feature type="strand" evidence="5">
    <location>
        <begin position="106"/>
        <end position="110"/>
    </location>
</feature>
<feature type="strand" evidence="5">
    <location>
        <begin position="116"/>
        <end position="133"/>
    </location>
</feature>